<evidence type="ECO:0000250" key="1">
    <source>
        <dbReference type="UniProtKB" id="P0C0S5"/>
    </source>
</evidence>
<evidence type="ECO:0000250" key="2">
    <source>
        <dbReference type="UniProtKB" id="P0C0S8"/>
    </source>
</evidence>
<evidence type="ECO:0000250" key="3">
    <source>
        <dbReference type="UniProtKB" id="P20671"/>
    </source>
</evidence>
<evidence type="ECO:0000256" key="4">
    <source>
        <dbReference type="SAM" id="MobiDB-lite"/>
    </source>
</evidence>
<evidence type="ECO:0000269" key="5">
    <source>
    </source>
</evidence>
<evidence type="ECO:0000269" key="6">
    <source>
    </source>
</evidence>
<evidence type="ECO:0000269" key="7">
    <source>
    </source>
</evidence>
<evidence type="ECO:0000269" key="8">
    <source>
    </source>
</evidence>
<evidence type="ECO:0000269" key="9">
    <source>
    </source>
</evidence>
<evidence type="ECO:0000269" key="10">
    <source>
    </source>
</evidence>
<evidence type="ECO:0000269" key="11">
    <source>
    </source>
</evidence>
<evidence type="ECO:0000269" key="12">
    <source>
    </source>
</evidence>
<evidence type="ECO:0000305" key="13"/>
<evidence type="ECO:0000312" key="14">
    <source>
        <dbReference type="MGI" id="MGI:2448289"/>
    </source>
</evidence>
<evidence type="ECO:0007829" key="15">
    <source>
        <dbReference type="PDB" id="8PKI"/>
    </source>
</evidence>
<proteinExistence type="evidence at protein level"/>
<dbReference type="EMBL" id="U62669">
    <property type="protein sequence ID" value="AAB04761.1"/>
    <property type="molecule type" value="Genomic_DNA"/>
</dbReference>
<dbReference type="EMBL" id="AY158918">
    <property type="protein sequence ID" value="AAO06228.1"/>
    <property type="molecule type" value="Genomic_DNA"/>
</dbReference>
<dbReference type="EMBL" id="AL592149">
    <property type="protein sequence ID" value="CAI24893.1"/>
    <property type="molecule type" value="Genomic_DNA"/>
</dbReference>
<dbReference type="EMBL" id="BC119295">
    <property type="protein sequence ID" value="AAI19296.1"/>
    <property type="molecule type" value="mRNA"/>
</dbReference>
<dbReference type="EMBL" id="BC119297">
    <property type="protein sequence ID" value="AAI19298.1"/>
    <property type="molecule type" value="mRNA"/>
</dbReference>
<dbReference type="CCDS" id="CCDS26351.1"/>
<dbReference type="RefSeq" id="NP_835495.1">
    <property type="nucleotide sequence ID" value="NM_178188.4"/>
</dbReference>
<dbReference type="PDB" id="8PKI">
    <property type="method" value="EM"/>
    <property type="resolution" value="2.58 A"/>
    <property type="chains" value="C/G=1-130"/>
</dbReference>
<dbReference type="PDBsum" id="8PKI"/>
<dbReference type="SMR" id="C0HKE3"/>
<dbReference type="FunCoup" id="C0HKE3">
    <property type="interactions" value="897"/>
</dbReference>
<dbReference type="iPTMnet" id="C0HKE3"/>
<dbReference type="jPOST" id="C0HKE3"/>
<dbReference type="Pumba" id="C0HKE3"/>
<dbReference type="Antibodypedia" id="72464">
    <property type="antibodies" value="208 antibodies from 18 providers"/>
</dbReference>
<dbReference type="DNASU" id="319172"/>
<dbReference type="Ensembl" id="ENSMUST00000070124.5">
    <property type="protein sequence ID" value="ENSMUSP00000088285.3"/>
    <property type="gene ID" value="ENSMUSG00000071516.3"/>
</dbReference>
<dbReference type="Ensembl" id="ENSMUST00000078369.3">
    <property type="protein sequence ID" value="ENSMUSP00000077477.2"/>
    <property type="gene ID" value="ENSMUSG00000061615.3"/>
</dbReference>
<dbReference type="Ensembl" id="ENSMUST00000081342.7">
    <property type="protein sequence ID" value="ENSMUSP00000080088.6"/>
    <property type="gene ID" value="ENSMUSG00000094777.3"/>
</dbReference>
<dbReference type="Ensembl" id="ENSMUST00000090776.7">
    <property type="protein sequence ID" value="ENSMUSP00000088281.5"/>
    <property type="gene ID" value="ENSMUSG00000071478.7"/>
</dbReference>
<dbReference type="Ensembl" id="ENSMUST00000091741.6">
    <property type="protein sequence ID" value="ENSMUSP00000089335.5"/>
    <property type="gene ID" value="ENSMUSG00000069301.6"/>
</dbReference>
<dbReference type="Ensembl" id="ENSMUST00000091745.6">
    <property type="protein sequence ID" value="ENSMUSP00000089339.6"/>
    <property type="gene ID" value="ENSMUSG00000094248.2"/>
</dbReference>
<dbReference type="Ensembl" id="ENSMUST00000091751.3">
    <property type="protein sequence ID" value="ENSMUSP00000089345.3"/>
    <property type="gene ID" value="ENSMUSG00000069309.3"/>
</dbReference>
<dbReference type="Ensembl" id="ENSMUST00000102969.6">
    <property type="protein sequence ID" value="ENSMUSP00000100034.4"/>
    <property type="gene ID" value="ENSMUSG00000069272.7"/>
</dbReference>
<dbReference type="Ensembl" id="ENSMUST00000171127.4">
    <property type="protein sequence ID" value="ENSMUSP00000127684.2"/>
    <property type="gene ID" value="ENSMUSG00000069270.7"/>
</dbReference>
<dbReference type="GeneID" id="319165"/>
<dbReference type="KEGG" id="mmu:319164"/>
<dbReference type="KEGG" id="mmu:319165"/>
<dbReference type="KEGG" id="mmu:319166"/>
<dbReference type="KEGG" id="mmu:319167"/>
<dbReference type="KEGG" id="mmu:319170"/>
<dbReference type="KEGG" id="mmu:319171"/>
<dbReference type="KEGG" id="mmu:319172"/>
<dbReference type="KEGG" id="mmu:319191"/>
<dbReference type="KEGG" id="mmu:665433"/>
<dbReference type="AGR" id="MGI:2448289"/>
<dbReference type="CTD" id="3012"/>
<dbReference type="CTD" id="3013"/>
<dbReference type="CTD" id="319170"/>
<dbReference type="CTD" id="319171"/>
<dbReference type="CTD" id="665433"/>
<dbReference type="CTD" id="8329"/>
<dbReference type="CTD" id="8334"/>
<dbReference type="CTD" id="8335"/>
<dbReference type="CTD" id="8969"/>
<dbReference type="MGI" id="MGI:2448289">
    <property type="gene designation" value="H2ac7"/>
</dbReference>
<dbReference type="VEuPathDB" id="HostDB:ENSMUSG00000061615"/>
<dbReference type="VEuPathDB" id="HostDB:ENSMUSG00000069270"/>
<dbReference type="VEuPathDB" id="HostDB:ENSMUSG00000069272"/>
<dbReference type="VEuPathDB" id="HostDB:ENSMUSG00000069301"/>
<dbReference type="VEuPathDB" id="HostDB:ENSMUSG00000069309"/>
<dbReference type="VEuPathDB" id="HostDB:ENSMUSG00000071478"/>
<dbReference type="VEuPathDB" id="HostDB:ENSMUSG00000071516"/>
<dbReference type="VEuPathDB" id="HostDB:ENSMUSG00000094248"/>
<dbReference type="VEuPathDB" id="HostDB:ENSMUSG00000094777"/>
<dbReference type="InParanoid" id="C0HKE3"/>
<dbReference type="OMA" id="TEDCRQT"/>
<dbReference type="OrthoDB" id="9610409at2759"/>
<dbReference type="BioGRID-ORCS" id="319164">
    <property type="hits" value="12 hits in 61 CRISPR screens"/>
</dbReference>
<dbReference type="BioGRID-ORCS" id="319165">
    <property type="hits" value="11 hits in 41 CRISPR screens"/>
</dbReference>
<dbReference type="BioGRID-ORCS" id="319166">
    <property type="hits" value="13 hits in 57 CRISPR screens"/>
</dbReference>
<dbReference type="BioGRID-ORCS" id="319167">
    <property type="hits" value="12 hits in 44 CRISPR screens"/>
</dbReference>
<dbReference type="BioGRID-ORCS" id="319170">
    <property type="hits" value="14 hits in 59 CRISPR screens"/>
</dbReference>
<dbReference type="BioGRID-ORCS" id="319171">
    <property type="hits" value="14 hits in 43 CRISPR screens"/>
</dbReference>
<dbReference type="BioGRID-ORCS" id="319172">
    <property type="hits" value="9 hits in 57 CRISPR screens"/>
</dbReference>
<dbReference type="BioGRID-ORCS" id="319191">
    <property type="hits" value="10 hits in 58 CRISPR screens"/>
</dbReference>
<dbReference type="BioGRID-ORCS" id="665433">
    <property type="hits" value="10 hits in 42 CRISPR screens"/>
</dbReference>
<dbReference type="PRO" id="PR:C0HKE3"/>
<dbReference type="Proteomes" id="UP000000589">
    <property type="component" value="Chromosome 13"/>
</dbReference>
<dbReference type="RNAct" id="C0HKE3">
    <property type="molecule type" value="protein"/>
</dbReference>
<dbReference type="Bgee" id="ENSMUSG00000061615">
    <property type="expression patterns" value="Expressed in uterus and 49 other cell types or tissues"/>
</dbReference>
<dbReference type="ExpressionAtlas" id="C0HKE3">
    <property type="expression patterns" value="baseline and differential"/>
</dbReference>
<dbReference type="GO" id="GO:0000786">
    <property type="term" value="C:nucleosome"/>
    <property type="evidence" value="ECO:0007669"/>
    <property type="project" value="UniProtKB-KW"/>
</dbReference>
<dbReference type="GO" id="GO:0005634">
    <property type="term" value="C:nucleus"/>
    <property type="evidence" value="ECO:0007669"/>
    <property type="project" value="UniProtKB-SubCell"/>
</dbReference>
<dbReference type="GO" id="GO:0003677">
    <property type="term" value="F:DNA binding"/>
    <property type="evidence" value="ECO:0007669"/>
    <property type="project" value="UniProtKB-KW"/>
</dbReference>
<dbReference type="GO" id="GO:0046982">
    <property type="term" value="F:protein heterodimerization activity"/>
    <property type="evidence" value="ECO:0007669"/>
    <property type="project" value="InterPro"/>
</dbReference>
<dbReference type="GO" id="GO:0030527">
    <property type="term" value="F:structural constituent of chromatin"/>
    <property type="evidence" value="ECO:0007669"/>
    <property type="project" value="InterPro"/>
</dbReference>
<dbReference type="CDD" id="cd00074">
    <property type="entry name" value="HFD_H2A"/>
    <property type="match status" value="1"/>
</dbReference>
<dbReference type="FunFam" id="1.10.20.10:FF:000103">
    <property type="entry name" value="Histone H2A type 1"/>
    <property type="match status" value="1"/>
</dbReference>
<dbReference type="Gene3D" id="1.10.20.10">
    <property type="entry name" value="Histone, subunit A"/>
    <property type="match status" value="1"/>
</dbReference>
<dbReference type="InterPro" id="IPR009072">
    <property type="entry name" value="Histone-fold"/>
</dbReference>
<dbReference type="InterPro" id="IPR002119">
    <property type="entry name" value="Histone_H2A"/>
</dbReference>
<dbReference type="InterPro" id="IPR007125">
    <property type="entry name" value="Histone_H2A/H2B/H3"/>
</dbReference>
<dbReference type="InterPro" id="IPR032454">
    <property type="entry name" value="Histone_H2A_C"/>
</dbReference>
<dbReference type="InterPro" id="IPR032458">
    <property type="entry name" value="Histone_H2A_CS"/>
</dbReference>
<dbReference type="PANTHER" id="PTHR23430">
    <property type="entry name" value="HISTONE H2A"/>
    <property type="match status" value="1"/>
</dbReference>
<dbReference type="Pfam" id="PF00125">
    <property type="entry name" value="Histone"/>
    <property type="match status" value="1"/>
</dbReference>
<dbReference type="Pfam" id="PF16211">
    <property type="entry name" value="Histone_H2A_C"/>
    <property type="match status" value="1"/>
</dbReference>
<dbReference type="PRINTS" id="PR00620">
    <property type="entry name" value="HISTONEH2A"/>
</dbReference>
<dbReference type="SMART" id="SM00414">
    <property type="entry name" value="H2A"/>
    <property type="match status" value="1"/>
</dbReference>
<dbReference type="SUPFAM" id="SSF47113">
    <property type="entry name" value="Histone-fold"/>
    <property type="match status" value="1"/>
</dbReference>
<dbReference type="PROSITE" id="PS00046">
    <property type="entry name" value="HISTONE_H2A"/>
    <property type="match status" value="1"/>
</dbReference>
<reference key="1">
    <citation type="journal article" date="1996" name="Genome Res.">
        <title>Characterization of the mouse histone gene cluster on chromosome 13: 45 histone genes in three patches spread over 1Mb.</title>
        <authorList>
            <person name="Wang Z.-F."/>
            <person name="Krasikov T."/>
            <person name="Frey M.R."/>
            <person name="Wang J."/>
            <person name="Matera A.G."/>
            <person name="Marzluff W.F."/>
        </authorList>
    </citation>
    <scope>NUCLEOTIDE SEQUENCE [GENOMIC DNA]</scope>
    <source>
        <strain>C57BL/6J</strain>
    </source>
</reference>
<reference key="2">
    <citation type="journal article" date="2002" name="Genomics">
        <title>The human and mouse replication-dependent histone genes.</title>
        <authorList>
            <person name="Marzluff W.F."/>
            <person name="Gongidi P."/>
            <person name="Woods K.R."/>
            <person name="Jin J."/>
            <person name="Maltais L.J."/>
        </authorList>
    </citation>
    <scope>NUCLEOTIDE SEQUENCE [GENOMIC DNA]</scope>
</reference>
<reference key="3">
    <citation type="journal article" date="2009" name="PLoS Biol.">
        <title>Lineage-specific biology revealed by a finished genome assembly of the mouse.</title>
        <authorList>
            <person name="Church D.M."/>
            <person name="Goodstadt L."/>
            <person name="Hillier L.W."/>
            <person name="Zody M.C."/>
            <person name="Goldstein S."/>
            <person name="She X."/>
            <person name="Bult C.J."/>
            <person name="Agarwala R."/>
            <person name="Cherry J.L."/>
            <person name="DiCuccio M."/>
            <person name="Hlavina W."/>
            <person name="Kapustin Y."/>
            <person name="Meric P."/>
            <person name="Maglott D."/>
            <person name="Birtle Z."/>
            <person name="Marques A.C."/>
            <person name="Graves T."/>
            <person name="Zhou S."/>
            <person name="Teague B."/>
            <person name="Potamousis K."/>
            <person name="Churas C."/>
            <person name="Place M."/>
            <person name="Herschleb J."/>
            <person name="Runnheim R."/>
            <person name="Forrest D."/>
            <person name="Amos-Landgraf J."/>
            <person name="Schwartz D.C."/>
            <person name="Cheng Z."/>
            <person name="Lindblad-Toh K."/>
            <person name="Eichler E.E."/>
            <person name="Ponting C.P."/>
        </authorList>
    </citation>
    <scope>NUCLEOTIDE SEQUENCE [LARGE SCALE GENOMIC DNA]</scope>
    <source>
        <strain>C57BL/6J</strain>
    </source>
</reference>
<reference key="4">
    <citation type="journal article" date="2004" name="Genome Res.">
        <title>The status, quality, and expansion of the NIH full-length cDNA project: the Mammalian Gene Collection (MGC).</title>
        <authorList>
            <consortium name="The MGC Project Team"/>
        </authorList>
    </citation>
    <scope>NUCLEOTIDE SEQUENCE [LARGE SCALE MRNA]</scope>
</reference>
<reference key="5">
    <citation type="journal article" date="1981" name="J. Biol. Chem.">
        <title>Quantitative determination of histone modification. H2A acetylation and phosphorylation.</title>
        <authorList>
            <person name="Pantazis P."/>
            <person name="Bonner W.M."/>
        </authorList>
    </citation>
    <scope>PHOSPHORYLATION AT SER-2</scope>
    <scope>ACETYLATION AT SER-2 AND LYS-6</scope>
</reference>
<reference key="6">
    <citation type="journal article" date="2004" name="Dev. Cell">
        <title>Polycomb group proteins Ring1A/B link ubiquitylation of histone H2A to heritable gene silencing and X inactivation.</title>
        <authorList>
            <person name="de Napoles M."/>
            <person name="Mermoud J.E."/>
            <person name="Wakao R."/>
            <person name="Tang Y.A."/>
            <person name="Endoh M."/>
            <person name="Appanah R."/>
            <person name="Nesterova T.B."/>
            <person name="Silva J."/>
            <person name="Otte A.P."/>
            <person name="Vidal M."/>
            <person name="Koseki H."/>
            <person name="Brockdorff N."/>
        </authorList>
    </citation>
    <scope>UBIQUITINATION AT LYS-120</scope>
</reference>
<reference key="7">
    <citation type="journal article" date="2004" name="J. Biol. Chem.">
        <title>Ring1b-mediated H2A ubiquitination associates with inactive X chromosomes and is involved in initiation of X inactivation.</title>
        <authorList>
            <person name="Fang J."/>
            <person name="Chen T."/>
            <person name="Chadwick B."/>
            <person name="Li E."/>
            <person name="Zhang Y."/>
        </authorList>
    </citation>
    <scope>UBIQUITINATION AT LYS-120</scope>
</reference>
<reference key="8">
    <citation type="journal article" date="2006" name="Nat. Cell Biol.">
        <title>Blimp1 associates with Prmt5 and directs histone arginine methylation in mouse germ cells.</title>
        <authorList>
            <person name="Ancelin K."/>
            <person name="Lange U.C."/>
            <person name="Hajkova P."/>
            <person name="Schneider R."/>
            <person name="Bannister A.J."/>
            <person name="Kouzarides T."/>
            <person name="Surani M.A."/>
        </authorList>
    </citation>
    <scope>METHYLATION AT ARG-4</scope>
</reference>
<reference key="9">
    <citation type="journal article" date="2011" name="Cell">
        <title>Identification of 67 histone marks and histone lysine crotonylation as a new type of histone modification.</title>
        <authorList>
            <person name="Tan M."/>
            <person name="Luo H."/>
            <person name="Lee S."/>
            <person name="Jin F."/>
            <person name="Yang J.S."/>
            <person name="Montellier E."/>
            <person name="Buchou T."/>
            <person name="Cheng Z."/>
            <person name="Rousseaux S."/>
            <person name="Rajagopal N."/>
            <person name="Lu Z."/>
            <person name="Ye Z."/>
            <person name="Zhu Q."/>
            <person name="Wysocka J."/>
            <person name="Ye Y."/>
            <person name="Khochbin S."/>
            <person name="Ren B."/>
            <person name="Zhao Y."/>
        </authorList>
    </citation>
    <scope>CROTONYLATION AT LYS-37 AND LYS-119</scope>
</reference>
<reference key="10">
    <citation type="journal article" date="2014" name="Nat. Chem. Biol.">
        <title>Lysine 2-hydroxyisobutyrylation is a widely distributed active histone mark.</title>
        <authorList>
            <person name="Dai L."/>
            <person name="Peng C."/>
            <person name="Montellier E."/>
            <person name="Lu Z."/>
            <person name="Chen Y."/>
            <person name="Ishii H."/>
            <person name="Debernardi A."/>
            <person name="Buchou T."/>
            <person name="Rousseaux S."/>
            <person name="Jin F."/>
            <person name="Sabari B.R."/>
            <person name="Deng Z."/>
            <person name="Allis C.D."/>
            <person name="Ren B."/>
            <person name="Khochbin S."/>
            <person name="Zhao Y."/>
        </authorList>
    </citation>
    <scope>HYDROXYBUTYRYLATION AT LYS-6; LYS-10; LYS-37; LYS-75; LYS-76; LYS-96 AND LYS-119</scope>
</reference>
<reference key="11">
    <citation type="journal article" date="2014" name="Nature">
        <title>Glutamine methylation in histone H2A is an RNA-polymerase-I-dedicated modification.</title>
        <authorList>
            <person name="Tessarz P."/>
            <person name="Santos-Rosa H."/>
            <person name="Robson S.C."/>
            <person name="Sylvestersen K.B."/>
            <person name="Nelson C.J."/>
            <person name="Nielsen M.L."/>
            <person name="Kouzarides T."/>
        </authorList>
    </citation>
    <scope>METHYLATION AT GLN-105</scope>
</reference>
<reference key="12">
    <citation type="journal article" date="2016" name="Mol. Cell">
        <title>Metabolic regulation of gene expression by histone lysine beta-hydroxybutyrylation.</title>
        <authorList>
            <person name="Xie Z."/>
            <person name="Zhang D."/>
            <person name="Chung D."/>
            <person name="Tang Z."/>
            <person name="Huang H."/>
            <person name="Dai L."/>
            <person name="Qi S."/>
            <person name="Li J."/>
            <person name="Colak G."/>
            <person name="Chen Y."/>
            <person name="Xia C."/>
            <person name="Peng C."/>
            <person name="Ruan H."/>
            <person name="Kirkey M."/>
            <person name="Wang D."/>
            <person name="Jensen L.M."/>
            <person name="Kwon O.K."/>
            <person name="Lee S."/>
            <person name="Pletcher S.D."/>
            <person name="Tan M."/>
            <person name="Lombard D.B."/>
            <person name="White K.P."/>
            <person name="Zhao H."/>
            <person name="Li J."/>
            <person name="Roeder R.G."/>
            <person name="Yang X."/>
            <person name="Zhao Y."/>
        </authorList>
    </citation>
    <scope>HYDROXYBUTYRYLATION AT LYS-6; LYS-37; LYS-120 AND LYS-126</scope>
</reference>
<accession>C0HKE3</accession>
<accession>P10812</accession>
<accession>P22752</accession>
<accession>Q149U0</accession>
<accession>Q5SZZ2</accession>
<name>H2A1D_MOUSE</name>
<protein>
    <recommendedName>
        <fullName evidence="13">Histone H2A type 1-D</fullName>
    </recommendedName>
</protein>
<gene>
    <name evidence="14" type="primary">H2ac7</name>
    <name evidence="14" type="synonym">Hist1h2ad</name>
</gene>
<organism>
    <name type="scientific">Mus musculus</name>
    <name type="common">Mouse</name>
    <dbReference type="NCBI Taxonomy" id="10090"/>
    <lineage>
        <taxon>Eukaryota</taxon>
        <taxon>Metazoa</taxon>
        <taxon>Chordata</taxon>
        <taxon>Craniata</taxon>
        <taxon>Vertebrata</taxon>
        <taxon>Euteleostomi</taxon>
        <taxon>Mammalia</taxon>
        <taxon>Eutheria</taxon>
        <taxon>Euarchontoglires</taxon>
        <taxon>Glires</taxon>
        <taxon>Rodentia</taxon>
        <taxon>Myomorpha</taxon>
        <taxon>Muroidea</taxon>
        <taxon>Muridae</taxon>
        <taxon>Murinae</taxon>
        <taxon>Mus</taxon>
        <taxon>Mus</taxon>
    </lineage>
</organism>
<sequence>MSGRGKQGGKARAKAKTRSSRAGLQFPVGRVHRLLRKGNYSERVGAGAPVYLAAVLEYLTAEILELAGNAARDNKKTRIIPRHLQLAIRNDEELNKLLGRVTIAQGGVLPNIQAVLLPKKTESHHKAKGK</sequence>
<keyword id="KW-0002">3D-structure</keyword>
<keyword id="KW-0007">Acetylation</keyword>
<keyword id="KW-0158">Chromosome</keyword>
<keyword id="KW-0164">Citrullination</keyword>
<keyword id="KW-0238">DNA-binding</keyword>
<keyword id="KW-0379">Hydroxylation</keyword>
<keyword id="KW-1017">Isopeptide bond</keyword>
<keyword id="KW-0488">Methylation</keyword>
<keyword id="KW-0544">Nucleosome core</keyword>
<keyword id="KW-0539">Nucleus</keyword>
<keyword id="KW-0597">Phosphoprotein</keyword>
<keyword id="KW-1185">Reference proteome</keyword>
<keyword id="KW-0832">Ubl conjugation</keyword>
<comment type="function">
    <text>Core component of nucleosome. Nucleosomes wrap and compact DNA into chromatin, limiting DNA accessibility to the cellular machineries which require DNA as a template. Histones thereby play a central role in transcription regulation, DNA repair, DNA replication and chromosomal stability. DNA accessibility is regulated via a complex set of post-translational modifications of histones, also called histone code, and nucleosome remodeling.</text>
</comment>
<comment type="subunit">
    <text>The nucleosome is a histone octamer containing two molecules each of H2A, H2B, H3 and H4 assembled in one H3-H4 heterotetramer and two H2A-H2B heterodimers. The octamer wraps approximately 147 bp of DNA.</text>
</comment>
<comment type="subcellular location">
    <subcellularLocation>
        <location>Nucleus</location>
    </subcellularLocation>
    <subcellularLocation>
        <location>Chromosome</location>
    </subcellularLocation>
</comment>
<comment type="PTM">
    <text evidence="2">Deiminated on Arg-4 in granulocytes upon calcium entry.</text>
</comment>
<comment type="PTM">
    <text evidence="2 5 6 9">Monoubiquitination of Lys-120 (H2AK119Ub) by RING1, TRIM37 and RNF2/RING2 complex gives a specific tag for epigenetic transcriptional repression and participates in X chromosome inactivation of female mammals. It is involved in the initiation of both imprinted and random X inactivation. Ubiquitinated H2A is enriched in inactive X chromosome chromatin. Ubiquitination of H2A functions downstream of methylation of 'Lys-27' of histone H3 (H3K27me). H2AK119Ub by RNF2/RING2 can also be induced by ultraviolet and may be involved in DNA repair. Following DNA double-strand breaks (DSBs), it is ubiquitinated through 'Lys-63' linkage of ubiquitin moieties by the E2 ligase UBE2N and the E3 ligases RNF8 and RNF168, leading to the recruitment of repair proteins to sites of DNA damage. Ubiquitination at Lys-14 and Lys-16 (H2AK13Ub and H2AK15Ub, respectively) in response to DNA damage is initiated by RNF168 that mediates monoubiquitination at these 2 sites, and 'Lys-63'-linked ubiquitin are then conjugated to monoubiquitin; RNF8 is able to extend 'Lys-63'-linked ubiquitin chains in vitro. Deubiquitinated by USP51 at Lys-14 and Lys-16 (H2AK13Ub and H2AK15Ub, respectively) after damaged DNA is repaired (By similarity). H2AK119Ub and ionizing radiation-induced 'Lys-63'-linked ubiquitination (H2AK13Ub and H2AK15Ub) are distinct events.</text>
</comment>
<comment type="PTM">
    <text evidence="2 12">Phosphorylation on Ser-2 (H2AS1ph) is enhanced during mitosis. Phosphorylation on Ser-2 by RPS6KA5/MSK1 directly represses transcription. Acetylation of H3 inhibits Ser-2 phosphorylation by RPS6KA5/MSK1. Phosphorylation at Thr-121 (H2AT120ph) by DCAF1 is present in the regulatory region of many tumor suppresor genes and down-regulates their transcription.</text>
</comment>
<comment type="PTM">
    <text evidence="7">Symmetric dimethylation on Arg-4 by the PRDM1/PRMT5 complex may play a crucial role in the germ-cell lineage.</text>
</comment>
<comment type="PTM">
    <text evidence="9">Glutamine methylation at Gln-105 (H2AQ104me) by FBL is specifically dedicated to polymerase I. It is present at 35S ribosomal DNA locus and impairs binding of the FACT complex.</text>
</comment>
<comment type="PTM">
    <text evidence="8">Crotonylation (Kcr) is specifically present in male germ cells and marks testis-specific genes in post-meiotic cells, including X-linked genes that escape sex chromosome inactivation in haploid cells. Crotonylation marks active promoters and enhancers and confers resistance to transcriptional repressors. It is also associated with post-meiotically activated genes on autosomes.</text>
</comment>
<comment type="PTM">
    <text evidence="11">Hydroxybutyrylation of histones is induced by starvation.</text>
</comment>
<comment type="PTM">
    <text evidence="1">Lactylated in macrophages by EP300/P300 by using lactoyl-CoA directly derived from endogenous or exogenous lactate, leading to stimulates gene transcription.</text>
</comment>
<comment type="similarity">
    <text evidence="13">Belongs to the histone H2A family.</text>
</comment>
<feature type="initiator methionine" description="Removed" evidence="3">
    <location>
        <position position="1"/>
    </location>
</feature>
<feature type="chain" id="PRO_0000439717" description="Histone H2A type 1-D">
    <location>
        <begin position="2"/>
        <end position="130"/>
    </location>
</feature>
<feature type="region of interest" description="Disordered" evidence="4">
    <location>
        <begin position="1"/>
        <end position="22"/>
    </location>
</feature>
<feature type="compositionally biased region" description="Basic residues" evidence="4">
    <location>
        <begin position="7"/>
        <end position="19"/>
    </location>
</feature>
<feature type="modified residue" description="N-acetylserine" evidence="12">
    <location>
        <position position="2"/>
    </location>
</feature>
<feature type="modified residue" description="Phosphoserine; by RPS6KA5" evidence="12">
    <location>
        <position position="2"/>
    </location>
</feature>
<feature type="modified residue" description="Citrulline; alternate" evidence="2">
    <location>
        <position position="4"/>
    </location>
</feature>
<feature type="modified residue" description="Symmetric dimethylarginine; by PRMT5; alternate" evidence="7">
    <location>
        <position position="4"/>
    </location>
</feature>
<feature type="modified residue" description="N6-(2-hydroxyisobutyryl)lysine; alternate" evidence="10">
    <location>
        <position position="6"/>
    </location>
</feature>
<feature type="modified residue" description="N6-(beta-hydroxybutyryl)lysine; alternate" evidence="11">
    <location>
        <position position="6"/>
    </location>
</feature>
<feature type="modified residue" description="N6-acetyllysine; alternate" evidence="12">
    <location>
        <position position="6"/>
    </location>
</feature>
<feature type="modified residue" description="N6-(2-hydroxyisobutyryl)lysine; alternate" evidence="10">
    <location>
        <position position="10"/>
    </location>
</feature>
<feature type="modified residue" description="N6-lactoyllysine; alternate" evidence="1">
    <location>
        <position position="10"/>
    </location>
</feature>
<feature type="modified residue" description="N6-succinyllysine; alternate" evidence="3">
    <location>
        <position position="10"/>
    </location>
</feature>
<feature type="modified residue" description="N6-(2-hydroxyisobutyryl)lysine; alternate" evidence="10">
    <location>
        <position position="37"/>
    </location>
</feature>
<feature type="modified residue" description="N6-(beta-hydroxybutyryl)lysine; alternate" evidence="11">
    <location>
        <position position="37"/>
    </location>
</feature>
<feature type="modified residue" description="N6-crotonyllysine; alternate" evidence="8">
    <location>
        <position position="37"/>
    </location>
</feature>
<feature type="modified residue" description="N6-(2-hydroxyisobutyryl)lysine" evidence="10">
    <location>
        <position position="75"/>
    </location>
</feature>
<feature type="modified residue" description="N6-(2-hydroxyisobutyryl)lysine" evidence="10">
    <location>
        <position position="76"/>
    </location>
</feature>
<feature type="modified residue" description="N6-(2-hydroxyisobutyryl)lysine; alternate" evidence="10">
    <location>
        <position position="96"/>
    </location>
</feature>
<feature type="modified residue" description="N6-glutaryllysine; alternate" evidence="2">
    <location>
        <position position="96"/>
    </location>
</feature>
<feature type="modified residue" description="N6-succinyllysine; alternate" evidence="3">
    <location>
        <position position="96"/>
    </location>
</feature>
<feature type="modified residue" description="N5-methylglutamine" evidence="9">
    <location>
        <position position="105"/>
    </location>
</feature>
<feature type="modified residue" description="N6-(2-hydroxyisobutyryl)lysine; alternate" evidence="10">
    <location>
        <position position="119"/>
    </location>
</feature>
<feature type="modified residue" description="N6-crotonyllysine; alternate" evidence="8">
    <location>
        <position position="119"/>
    </location>
</feature>
<feature type="modified residue" description="N6-glutaryllysine; alternate" evidence="2">
    <location>
        <position position="119"/>
    </location>
</feature>
<feature type="modified residue" description="N6-(beta-hydroxybutyryl)lysine; alternate" evidence="11">
    <location>
        <position position="120"/>
    </location>
</feature>
<feature type="modified residue" description="N6-crotonyllysine; alternate" evidence="2">
    <location>
        <position position="120"/>
    </location>
</feature>
<feature type="modified residue" description="N6-glutaryllysine; alternate" evidence="2">
    <location>
        <position position="120"/>
    </location>
</feature>
<feature type="modified residue" description="Phosphothreonine; by DCAF1" evidence="3">
    <location>
        <position position="121"/>
    </location>
</feature>
<feature type="modified residue" description="N6-(beta-hydroxybutyryl)lysine; alternate" evidence="11">
    <location>
        <position position="126"/>
    </location>
</feature>
<feature type="modified residue" description="N6-crotonyllysine; alternate" evidence="2">
    <location>
        <position position="126"/>
    </location>
</feature>
<feature type="modified residue" description="N6-glutaryllysine; alternate" evidence="2">
    <location>
        <position position="126"/>
    </location>
</feature>
<feature type="cross-link" description="Glycyl lysine isopeptide (Lys-Gly) (interchain with G-Cter in ubiquitin)" evidence="3">
    <location>
        <position position="14"/>
    </location>
</feature>
<feature type="cross-link" description="Glycyl lysine isopeptide (Lys-Gly) (interchain with G-Cter in ubiquitin)" evidence="3">
    <location>
        <position position="16"/>
    </location>
</feature>
<feature type="cross-link" description="Glycyl lysine isopeptide (Lys-Gly) (interchain with G-Cter in ubiquitin); alternate" evidence="5 6">
    <location>
        <position position="120"/>
    </location>
</feature>
<feature type="helix" evidence="15">
    <location>
        <begin position="18"/>
        <end position="22"/>
    </location>
</feature>
<feature type="helix" evidence="15">
    <location>
        <begin position="28"/>
        <end position="37"/>
    </location>
</feature>
<feature type="strand" evidence="15">
    <location>
        <begin position="42"/>
        <end position="44"/>
    </location>
</feature>
<feature type="helix" evidence="15">
    <location>
        <begin position="48"/>
        <end position="73"/>
    </location>
</feature>
<feature type="strand" evidence="15">
    <location>
        <begin position="77"/>
        <end position="79"/>
    </location>
</feature>
<feature type="helix" evidence="15">
    <location>
        <begin position="81"/>
        <end position="89"/>
    </location>
</feature>
<feature type="helix" evidence="15">
    <location>
        <begin position="92"/>
        <end position="97"/>
    </location>
</feature>
<feature type="strand" evidence="15">
    <location>
        <begin position="99"/>
        <end position="103"/>
    </location>
</feature>